<dbReference type="EC" id="3.1.-.-" evidence="1"/>
<dbReference type="EMBL" id="AE016815">
    <property type="protein sequence ID" value="AAS50719.2"/>
    <property type="molecule type" value="Genomic_DNA"/>
</dbReference>
<dbReference type="RefSeq" id="NP_982895.2">
    <property type="nucleotide sequence ID" value="NM_208248.2"/>
</dbReference>
<dbReference type="SMR" id="Q75DS8"/>
<dbReference type="FunCoup" id="Q75DS8">
    <property type="interactions" value="1096"/>
</dbReference>
<dbReference type="STRING" id="284811.Q75DS8"/>
<dbReference type="EnsemblFungi" id="AAS50719">
    <property type="protein sequence ID" value="AAS50719"/>
    <property type="gene ID" value="AGOS_ABL052C"/>
</dbReference>
<dbReference type="GeneID" id="4618978"/>
<dbReference type="KEGG" id="ago:AGOS_ABL052C"/>
<dbReference type="eggNOG" id="KOG2519">
    <property type="taxonomic scope" value="Eukaryota"/>
</dbReference>
<dbReference type="HOGENOM" id="CLU_032444_2_0_1"/>
<dbReference type="InParanoid" id="Q75DS8"/>
<dbReference type="OMA" id="MGIPWVQ"/>
<dbReference type="OrthoDB" id="1937206at2759"/>
<dbReference type="Proteomes" id="UP000000591">
    <property type="component" value="Chromosome II"/>
</dbReference>
<dbReference type="GO" id="GO:0005737">
    <property type="term" value="C:cytoplasm"/>
    <property type="evidence" value="ECO:0000318"/>
    <property type="project" value="GO_Central"/>
</dbReference>
<dbReference type="GO" id="GO:0005829">
    <property type="term" value="C:cytosol"/>
    <property type="evidence" value="ECO:0007669"/>
    <property type="project" value="EnsemblFungi"/>
</dbReference>
<dbReference type="GO" id="GO:0005739">
    <property type="term" value="C:mitochondrion"/>
    <property type="evidence" value="ECO:0007669"/>
    <property type="project" value="UniProtKB-SubCell"/>
</dbReference>
<dbReference type="GO" id="GO:0005730">
    <property type="term" value="C:nucleolus"/>
    <property type="evidence" value="ECO:0007669"/>
    <property type="project" value="UniProtKB-SubCell"/>
</dbReference>
<dbReference type="GO" id="GO:0005654">
    <property type="term" value="C:nucleoplasm"/>
    <property type="evidence" value="ECO:0007669"/>
    <property type="project" value="UniProtKB-SubCell"/>
</dbReference>
<dbReference type="GO" id="GO:0005634">
    <property type="term" value="C:nucleus"/>
    <property type="evidence" value="ECO:0000318"/>
    <property type="project" value="GO_Central"/>
</dbReference>
<dbReference type="GO" id="GO:0008409">
    <property type="term" value="F:5'-3' exonuclease activity"/>
    <property type="evidence" value="ECO:0000318"/>
    <property type="project" value="GO_Central"/>
</dbReference>
<dbReference type="GO" id="GO:0017108">
    <property type="term" value="F:5'-flap endonuclease activity"/>
    <property type="evidence" value="ECO:0000318"/>
    <property type="project" value="GO_Central"/>
</dbReference>
<dbReference type="GO" id="GO:0003677">
    <property type="term" value="F:DNA binding"/>
    <property type="evidence" value="ECO:0007669"/>
    <property type="project" value="UniProtKB-UniRule"/>
</dbReference>
<dbReference type="GO" id="GO:0000287">
    <property type="term" value="F:magnesium ion binding"/>
    <property type="evidence" value="ECO:0007669"/>
    <property type="project" value="UniProtKB-UniRule"/>
</dbReference>
<dbReference type="GO" id="GO:0006284">
    <property type="term" value="P:base-excision repair"/>
    <property type="evidence" value="ECO:0007669"/>
    <property type="project" value="UniProtKB-UniRule"/>
</dbReference>
<dbReference type="GO" id="GO:0043137">
    <property type="term" value="P:DNA replication, removal of RNA primer"/>
    <property type="evidence" value="ECO:0007669"/>
    <property type="project" value="UniProtKB-UniRule"/>
</dbReference>
<dbReference type="GO" id="GO:0006303">
    <property type="term" value="P:double-strand break repair via nonhomologous end joining"/>
    <property type="evidence" value="ECO:0007669"/>
    <property type="project" value="EnsemblFungi"/>
</dbReference>
<dbReference type="GO" id="GO:0007534">
    <property type="term" value="P:gene conversion at mating-type locus"/>
    <property type="evidence" value="ECO:0007669"/>
    <property type="project" value="EnsemblFungi"/>
</dbReference>
<dbReference type="GO" id="GO:0035753">
    <property type="term" value="P:maintenance of DNA trinucleotide repeats"/>
    <property type="evidence" value="ECO:0007669"/>
    <property type="project" value="EnsemblFungi"/>
</dbReference>
<dbReference type="CDD" id="cd09907">
    <property type="entry name" value="H3TH_FEN1-Euk"/>
    <property type="match status" value="1"/>
</dbReference>
<dbReference type="CDD" id="cd09867">
    <property type="entry name" value="PIN_FEN1"/>
    <property type="match status" value="1"/>
</dbReference>
<dbReference type="FunFam" id="1.10.150.20:FF:000009">
    <property type="entry name" value="Flap endonuclease 1"/>
    <property type="match status" value="1"/>
</dbReference>
<dbReference type="FunFam" id="3.40.50.1010:FF:000003">
    <property type="entry name" value="Flap endonuclease 1"/>
    <property type="match status" value="1"/>
</dbReference>
<dbReference type="Gene3D" id="1.10.150.20">
    <property type="entry name" value="5' to 3' exonuclease, C-terminal subdomain"/>
    <property type="match status" value="1"/>
</dbReference>
<dbReference type="Gene3D" id="3.40.50.1010">
    <property type="entry name" value="5'-nuclease"/>
    <property type="match status" value="1"/>
</dbReference>
<dbReference type="HAMAP" id="MF_00614">
    <property type="entry name" value="Fen"/>
    <property type="match status" value="1"/>
</dbReference>
<dbReference type="InterPro" id="IPR036279">
    <property type="entry name" value="5-3_exonuclease_C_sf"/>
</dbReference>
<dbReference type="InterPro" id="IPR023426">
    <property type="entry name" value="Flap_endonuc"/>
</dbReference>
<dbReference type="InterPro" id="IPR008918">
    <property type="entry name" value="HhH2"/>
</dbReference>
<dbReference type="InterPro" id="IPR029060">
    <property type="entry name" value="PIN-like_dom_sf"/>
</dbReference>
<dbReference type="InterPro" id="IPR006086">
    <property type="entry name" value="XPG-I_dom"/>
</dbReference>
<dbReference type="InterPro" id="IPR006084">
    <property type="entry name" value="XPG/Rad2"/>
</dbReference>
<dbReference type="InterPro" id="IPR019974">
    <property type="entry name" value="XPG_CS"/>
</dbReference>
<dbReference type="InterPro" id="IPR006085">
    <property type="entry name" value="XPG_DNA_repair_N"/>
</dbReference>
<dbReference type="PANTHER" id="PTHR11081:SF9">
    <property type="entry name" value="FLAP ENDONUCLEASE 1"/>
    <property type="match status" value="1"/>
</dbReference>
<dbReference type="PANTHER" id="PTHR11081">
    <property type="entry name" value="FLAP ENDONUCLEASE FAMILY MEMBER"/>
    <property type="match status" value="1"/>
</dbReference>
<dbReference type="Pfam" id="PF00867">
    <property type="entry name" value="XPG_I"/>
    <property type="match status" value="1"/>
</dbReference>
<dbReference type="Pfam" id="PF00752">
    <property type="entry name" value="XPG_N"/>
    <property type="match status" value="1"/>
</dbReference>
<dbReference type="PRINTS" id="PR00853">
    <property type="entry name" value="XPGRADSUPER"/>
</dbReference>
<dbReference type="SMART" id="SM00279">
    <property type="entry name" value="HhH2"/>
    <property type="match status" value="1"/>
</dbReference>
<dbReference type="SMART" id="SM00484">
    <property type="entry name" value="XPGI"/>
    <property type="match status" value="1"/>
</dbReference>
<dbReference type="SMART" id="SM00485">
    <property type="entry name" value="XPGN"/>
    <property type="match status" value="1"/>
</dbReference>
<dbReference type="SUPFAM" id="SSF47807">
    <property type="entry name" value="5' to 3' exonuclease, C-terminal subdomain"/>
    <property type="match status" value="1"/>
</dbReference>
<dbReference type="SUPFAM" id="SSF88723">
    <property type="entry name" value="PIN domain-like"/>
    <property type="match status" value="1"/>
</dbReference>
<dbReference type="PROSITE" id="PS00841">
    <property type="entry name" value="XPG_1"/>
    <property type="match status" value="1"/>
</dbReference>
<dbReference type="PROSITE" id="PS00842">
    <property type="entry name" value="XPG_2"/>
    <property type="match status" value="1"/>
</dbReference>
<accession>Q75DS8</accession>
<proteinExistence type="inferred from homology"/>
<name>FEN1_EREGS</name>
<organism>
    <name type="scientific">Eremothecium gossypii (strain ATCC 10895 / CBS 109.51 / FGSC 9923 / NRRL Y-1056)</name>
    <name type="common">Yeast</name>
    <name type="synonym">Ashbya gossypii</name>
    <dbReference type="NCBI Taxonomy" id="284811"/>
    <lineage>
        <taxon>Eukaryota</taxon>
        <taxon>Fungi</taxon>
        <taxon>Dikarya</taxon>
        <taxon>Ascomycota</taxon>
        <taxon>Saccharomycotina</taxon>
        <taxon>Saccharomycetes</taxon>
        <taxon>Saccharomycetales</taxon>
        <taxon>Saccharomycetaceae</taxon>
        <taxon>Eremothecium</taxon>
    </lineage>
</organism>
<gene>
    <name evidence="1" type="primary">FEN1</name>
    <name type="ordered locus">ABL052C</name>
</gene>
<sequence>MGIKGLNSIIQQQVPSAIRPREMKQFFGRRVAIDASMSLYQFLIAVRQADGVQLASADGETTSHLMGMFYRTLRMVDHGLKPCYVFDGKPPVLKAHELDKRTERRKETEQKLAELTEQAEIMKHERRLVKVEQWHVAEAKKLLGLMGIPYVDAPGEAEAQCAELAKKGKVFAAASEDMDTLCYRTPYLLRHLTFSEARKEPIHEIDTELVLQGLGLSQEQLVDLGIMLGCDYCESIKGVGPVTALKLIKEHGSLENIVEFISSGGNAKWKVPENWPYKEARALFLQPDVLDAEGVSLKWEEPKEEELIAFMCKEKGFNEDRIKSGIQKLRKGLKGGVQGRLDSFFKVKPKTTEQLAASARKAQAAKKTNQKGKVLKRR</sequence>
<feature type="chain" id="PRO_0000403559" description="Flap endonuclease 1">
    <location>
        <begin position="1"/>
        <end position="378"/>
    </location>
</feature>
<feature type="region of interest" description="N-domain">
    <location>
        <begin position="1"/>
        <end position="105"/>
    </location>
</feature>
<feature type="region of interest" description="I-domain">
    <location>
        <begin position="120"/>
        <end position="251"/>
    </location>
</feature>
<feature type="region of interest" description="Interaction with PCNA" evidence="1">
    <location>
        <begin position="337"/>
        <end position="345"/>
    </location>
</feature>
<feature type="region of interest" description="Disordered" evidence="2">
    <location>
        <begin position="356"/>
        <end position="378"/>
    </location>
</feature>
<feature type="compositionally biased region" description="Low complexity" evidence="2">
    <location>
        <begin position="356"/>
        <end position="367"/>
    </location>
</feature>
<feature type="compositionally biased region" description="Basic residues" evidence="2">
    <location>
        <begin position="368"/>
        <end position="378"/>
    </location>
</feature>
<feature type="binding site" evidence="1">
    <location>
        <position position="34"/>
    </location>
    <ligand>
        <name>Mg(2+)</name>
        <dbReference type="ChEBI" id="CHEBI:18420"/>
        <label>1</label>
    </ligand>
</feature>
<feature type="binding site" evidence="1">
    <location>
        <position position="47"/>
    </location>
    <ligand>
        <name>DNA</name>
        <dbReference type="ChEBI" id="CHEBI:16991"/>
    </ligand>
</feature>
<feature type="binding site" evidence="1">
    <location>
        <position position="71"/>
    </location>
    <ligand>
        <name>DNA</name>
        <dbReference type="ChEBI" id="CHEBI:16991"/>
    </ligand>
</feature>
<feature type="binding site" evidence="1">
    <location>
        <position position="87"/>
    </location>
    <ligand>
        <name>Mg(2+)</name>
        <dbReference type="ChEBI" id="CHEBI:18420"/>
        <label>1</label>
    </ligand>
</feature>
<feature type="binding site" evidence="1">
    <location>
        <position position="156"/>
    </location>
    <ligand>
        <name>DNA</name>
        <dbReference type="ChEBI" id="CHEBI:16991"/>
    </ligand>
</feature>
<feature type="binding site" evidence="1">
    <location>
        <position position="156"/>
    </location>
    <ligand>
        <name>Mg(2+)</name>
        <dbReference type="ChEBI" id="CHEBI:18420"/>
        <label>1</label>
    </ligand>
</feature>
<feature type="binding site" evidence="1">
    <location>
        <position position="158"/>
    </location>
    <ligand>
        <name>Mg(2+)</name>
        <dbReference type="ChEBI" id="CHEBI:18420"/>
        <label>1</label>
    </ligand>
</feature>
<feature type="binding site" evidence="1">
    <location>
        <position position="177"/>
    </location>
    <ligand>
        <name>Mg(2+)</name>
        <dbReference type="ChEBI" id="CHEBI:18420"/>
        <label>2</label>
    </ligand>
</feature>
<feature type="binding site" evidence="1">
    <location>
        <position position="179"/>
    </location>
    <ligand>
        <name>Mg(2+)</name>
        <dbReference type="ChEBI" id="CHEBI:18420"/>
        <label>2</label>
    </ligand>
</feature>
<feature type="binding site" evidence="1">
    <location>
        <position position="229"/>
    </location>
    <ligand>
        <name>DNA</name>
        <dbReference type="ChEBI" id="CHEBI:16991"/>
    </ligand>
</feature>
<feature type="binding site" evidence="1">
    <location>
        <position position="231"/>
    </location>
    <ligand>
        <name>DNA</name>
        <dbReference type="ChEBI" id="CHEBI:16991"/>
    </ligand>
</feature>
<feature type="binding site" evidence="1">
    <location>
        <position position="231"/>
    </location>
    <ligand>
        <name>Mg(2+)</name>
        <dbReference type="ChEBI" id="CHEBI:18420"/>
        <label>2</label>
    </ligand>
</feature>
<protein>
    <recommendedName>
        <fullName evidence="1">Flap endonuclease 1</fullName>
        <shortName evidence="1">FEN-1</shortName>
        <ecNumber evidence="1">3.1.-.-</ecNumber>
    </recommendedName>
    <alternativeName>
        <fullName evidence="1">Flap structure-specific endonuclease 1</fullName>
    </alternativeName>
</protein>
<reference key="1">
    <citation type="journal article" date="2004" name="Science">
        <title>The Ashbya gossypii genome as a tool for mapping the ancient Saccharomyces cerevisiae genome.</title>
        <authorList>
            <person name="Dietrich F.S."/>
            <person name="Voegeli S."/>
            <person name="Brachat S."/>
            <person name="Lerch A."/>
            <person name="Gates K."/>
            <person name="Steiner S."/>
            <person name="Mohr C."/>
            <person name="Poehlmann R."/>
            <person name="Luedi P."/>
            <person name="Choi S."/>
            <person name="Wing R.A."/>
            <person name="Flavier A."/>
            <person name="Gaffney T.D."/>
            <person name="Philippsen P."/>
        </authorList>
    </citation>
    <scope>NUCLEOTIDE SEQUENCE [LARGE SCALE GENOMIC DNA]</scope>
    <source>
        <strain>ATCC 10895 / CBS 109.51 / FGSC 9923 / NRRL Y-1056</strain>
    </source>
</reference>
<reference key="2">
    <citation type="journal article" date="2013" name="G3 (Bethesda)">
        <title>Genomes of Ashbya fungi isolated from insects reveal four mating-type loci, numerous translocations, lack of transposons, and distinct gene duplications.</title>
        <authorList>
            <person name="Dietrich F.S."/>
            <person name="Voegeli S."/>
            <person name="Kuo S."/>
            <person name="Philippsen P."/>
        </authorList>
    </citation>
    <scope>GENOME REANNOTATION</scope>
    <source>
        <strain>ATCC 10895 / CBS 109.51 / FGSC 9923 / NRRL Y-1056</strain>
    </source>
</reference>
<evidence type="ECO:0000255" key="1">
    <source>
        <dbReference type="HAMAP-Rule" id="MF_03140"/>
    </source>
</evidence>
<evidence type="ECO:0000256" key="2">
    <source>
        <dbReference type="SAM" id="MobiDB-lite"/>
    </source>
</evidence>
<comment type="function">
    <text evidence="1">Structure-specific nuclease with 5'-flap endonuclease and 5'-3' exonuclease activities involved in DNA replication and repair. During DNA replication, cleaves the 5'-overhanging flap structure that is generated by displacement synthesis when DNA polymerase encounters the 5'-end of a downstream Okazaki fragment. It enters the flap from the 5'-end and then tracks to cleave the flap base, leaving a nick for ligation. Also involved in the long patch base excision repair (LP-BER) pathway, by cleaving within the apurinic/apyrimidinic (AP) site-terminated flap. Acts as a genome stabilization factor that prevents flaps from equilibrating into structures that lead to duplications and deletions. Also possesses 5'-3' exonuclease activity on nicked or gapped double-stranded DNA, and exhibits RNase H activity. Also involved in replication and repair of rDNA and in repairing mitochondrial DNA.</text>
</comment>
<comment type="cofactor">
    <cofactor evidence="1">
        <name>Mg(2+)</name>
        <dbReference type="ChEBI" id="CHEBI:18420"/>
    </cofactor>
    <text evidence="1">Binds 2 magnesium ions per subunit. They probably participate in the reaction catalyzed by the enzyme. May bind an additional third magnesium ion after substrate binding.</text>
</comment>
<comment type="subunit">
    <text evidence="1">Interacts with PCNA. Three molecules of FEN1 bind to one PCNA trimer with each molecule binding to one PCNA monomer. PCNA stimulates the nuclease activity without altering cleavage specificity.</text>
</comment>
<comment type="subcellular location">
    <subcellularLocation>
        <location evidence="1">Nucleus</location>
        <location evidence="1">Nucleolus</location>
    </subcellularLocation>
    <subcellularLocation>
        <location evidence="1">Nucleus</location>
        <location evidence="1">Nucleoplasm</location>
    </subcellularLocation>
    <subcellularLocation>
        <location evidence="1">Mitochondrion</location>
    </subcellularLocation>
    <text evidence="1">Resides mostly in the nucleoli and relocalizes to the nucleoplasm upon DNA damage.</text>
</comment>
<comment type="PTM">
    <text evidence="1">Phosphorylated. Phosphorylation upon DNA damage induces relocalization to the nuclear plasma.</text>
</comment>
<comment type="similarity">
    <text evidence="1">Belongs to the XPG/RAD2 endonuclease family. FEN1 subfamily.</text>
</comment>
<keyword id="KW-0227">DNA damage</keyword>
<keyword id="KW-0234">DNA repair</keyword>
<keyword id="KW-0235">DNA replication</keyword>
<keyword id="KW-0255">Endonuclease</keyword>
<keyword id="KW-0269">Exonuclease</keyword>
<keyword id="KW-0378">Hydrolase</keyword>
<keyword id="KW-0460">Magnesium</keyword>
<keyword id="KW-0479">Metal-binding</keyword>
<keyword id="KW-0496">Mitochondrion</keyword>
<keyword id="KW-0540">Nuclease</keyword>
<keyword id="KW-0539">Nucleus</keyword>
<keyword id="KW-0597">Phosphoprotein</keyword>
<keyword id="KW-1185">Reference proteome</keyword>